<dbReference type="EC" id="2.7.4.6" evidence="1"/>
<dbReference type="EMBL" id="CP000926">
    <property type="protein sequence ID" value="ABY96802.1"/>
    <property type="molecule type" value="Genomic_DNA"/>
</dbReference>
<dbReference type="RefSeq" id="WP_008092560.1">
    <property type="nucleotide sequence ID" value="NC_010322.1"/>
</dbReference>
<dbReference type="SMR" id="B0KPI3"/>
<dbReference type="GeneID" id="83668146"/>
<dbReference type="KEGG" id="ppg:PputGB1_0892"/>
<dbReference type="eggNOG" id="COG0105">
    <property type="taxonomic scope" value="Bacteria"/>
</dbReference>
<dbReference type="HOGENOM" id="CLU_060216_8_1_6"/>
<dbReference type="Proteomes" id="UP000002157">
    <property type="component" value="Chromosome"/>
</dbReference>
<dbReference type="GO" id="GO:0005737">
    <property type="term" value="C:cytoplasm"/>
    <property type="evidence" value="ECO:0007669"/>
    <property type="project" value="UniProtKB-SubCell"/>
</dbReference>
<dbReference type="GO" id="GO:0005524">
    <property type="term" value="F:ATP binding"/>
    <property type="evidence" value="ECO:0007669"/>
    <property type="project" value="UniProtKB-UniRule"/>
</dbReference>
<dbReference type="GO" id="GO:0046872">
    <property type="term" value="F:metal ion binding"/>
    <property type="evidence" value="ECO:0007669"/>
    <property type="project" value="UniProtKB-KW"/>
</dbReference>
<dbReference type="GO" id="GO:0004550">
    <property type="term" value="F:nucleoside diphosphate kinase activity"/>
    <property type="evidence" value="ECO:0007669"/>
    <property type="project" value="UniProtKB-UniRule"/>
</dbReference>
<dbReference type="GO" id="GO:0006241">
    <property type="term" value="P:CTP biosynthetic process"/>
    <property type="evidence" value="ECO:0007669"/>
    <property type="project" value="UniProtKB-UniRule"/>
</dbReference>
<dbReference type="GO" id="GO:0006183">
    <property type="term" value="P:GTP biosynthetic process"/>
    <property type="evidence" value="ECO:0007669"/>
    <property type="project" value="UniProtKB-UniRule"/>
</dbReference>
<dbReference type="GO" id="GO:0006228">
    <property type="term" value="P:UTP biosynthetic process"/>
    <property type="evidence" value="ECO:0007669"/>
    <property type="project" value="UniProtKB-UniRule"/>
</dbReference>
<dbReference type="CDD" id="cd04413">
    <property type="entry name" value="NDPk_I"/>
    <property type="match status" value="1"/>
</dbReference>
<dbReference type="FunFam" id="3.30.70.141:FF:000001">
    <property type="entry name" value="Nucleoside diphosphate kinase"/>
    <property type="match status" value="1"/>
</dbReference>
<dbReference type="Gene3D" id="3.30.70.141">
    <property type="entry name" value="Nucleoside diphosphate kinase-like domain"/>
    <property type="match status" value="1"/>
</dbReference>
<dbReference type="HAMAP" id="MF_00451">
    <property type="entry name" value="NDP_kinase"/>
    <property type="match status" value="1"/>
</dbReference>
<dbReference type="InterPro" id="IPR034907">
    <property type="entry name" value="NDK-like_dom"/>
</dbReference>
<dbReference type="InterPro" id="IPR036850">
    <property type="entry name" value="NDK-like_dom_sf"/>
</dbReference>
<dbReference type="InterPro" id="IPR001564">
    <property type="entry name" value="Nucleoside_diP_kinase"/>
</dbReference>
<dbReference type="InterPro" id="IPR023005">
    <property type="entry name" value="Nucleoside_diP_kinase_AS"/>
</dbReference>
<dbReference type="NCBIfam" id="NF001908">
    <property type="entry name" value="PRK00668.1"/>
    <property type="match status" value="1"/>
</dbReference>
<dbReference type="PANTHER" id="PTHR46161">
    <property type="entry name" value="NUCLEOSIDE DIPHOSPHATE KINASE"/>
    <property type="match status" value="1"/>
</dbReference>
<dbReference type="PANTHER" id="PTHR46161:SF3">
    <property type="entry name" value="NUCLEOSIDE DIPHOSPHATE KINASE DDB_G0292928-RELATED"/>
    <property type="match status" value="1"/>
</dbReference>
<dbReference type="Pfam" id="PF00334">
    <property type="entry name" value="NDK"/>
    <property type="match status" value="1"/>
</dbReference>
<dbReference type="PRINTS" id="PR01243">
    <property type="entry name" value="NUCDPKINASE"/>
</dbReference>
<dbReference type="SMART" id="SM00562">
    <property type="entry name" value="NDK"/>
    <property type="match status" value="1"/>
</dbReference>
<dbReference type="SUPFAM" id="SSF54919">
    <property type="entry name" value="Nucleoside diphosphate kinase, NDK"/>
    <property type="match status" value="1"/>
</dbReference>
<dbReference type="PROSITE" id="PS00469">
    <property type="entry name" value="NDPK"/>
    <property type="match status" value="1"/>
</dbReference>
<dbReference type="PROSITE" id="PS51374">
    <property type="entry name" value="NDPK_LIKE"/>
    <property type="match status" value="1"/>
</dbReference>
<accession>B0KPI3</accession>
<proteinExistence type="inferred from homology"/>
<organism>
    <name type="scientific">Pseudomonas putida (strain GB-1)</name>
    <dbReference type="NCBI Taxonomy" id="76869"/>
    <lineage>
        <taxon>Bacteria</taxon>
        <taxon>Pseudomonadati</taxon>
        <taxon>Pseudomonadota</taxon>
        <taxon>Gammaproteobacteria</taxon>
        <taxon>Pseudomonadales</taxon>
        <taxon>Pseudomonadaceae</taxon>
        <taxon>Pseudomonas</taxon>
    </lineage>
</organism>
<reference key="1">
    <citation type="submission" date="2008-01" db="EMBL/GenBank/DDBJ databases">
        <title>Complete sequence of Pseudomonas putida GB-1.</title>
        <authorList>
            <consortium name="US DOE Joint Genome Institute"/>
            <person name="Copeland A."/>
            <person name="Lucas S."/>
            <person name="Lapidus A."/>
            <person name="Barry K."/>
            <person name="Glavina del Rio T."/>
            <person name="Dalin E."/>
            <person name="Tice H."/>
            <person name="Pitluck S."/>
            <person name="Bruce D."/>
            <person name="Goodwin L."/>
            <person name="Chertkov O."/>
            <person name="Brettin T."/>
            <person name="Detter J.C."/>
            <person name="Han C."/>
            <person name="Kuske C.R."/>
            <person name="Schmutz J."/>
            <person name="Larimer F."/>
            <person name="Land M."/>
            <person name="Hauser L."/>
            <person name="Kyrpides N."/>
            <person name="Kim E."/>
            <person name="McCarthy J.K."/>
            <person name="Richardson P."/>
        </authorList>
    </citation>
    <scope>NUCLEOTIDE SEQUENCE [LARGE SCALE GENOMIC DNA]</scope>
    <source>
        <strain>GB-1</strain>
    </source>
</reference>
<evidence type="ECO:0000255" key="1">
    <source>
        <dbReference type="HAMAP-Rule" id="MF_00451"/>
    </source>
</evidence>
<sequence>MAVQRTFSIIKPDAVAKNVIGKITTRFEEAGLKIVASKIKQLSKAEAEGFYAEHSARGFFGDLVAFMTSGPVVVQVLEGENAIALNRELMGATNPKEAAAGTIRADFAESIDANAVHGSDSEAAAAREIAYFFAATEVTTR</sequence>
<keyword id="KW-0067">ATP-binding</keyword>
<keyword id="KW-0963">Cytoplasm</keyword>
<keyword id="KW-0418">Kinase</keyword>
<keyword id="KW-0460">Magnesium</keyword>
<keyword id="KW-0479">Metal-binding</keyword>
<keyword id="KW-0546">Nucleotide metabolism</keyword>
<keyword id="KW-0547">Nucleotide-binding</keyword>
<keyword id="KW-0597">Phosphoprotein</keyword>
<keyword id="KW-0808">Transferase</keyword>
<gene>
    <name evidence="1" type="primary">ndk</name>
    <name type="ordered locus">PputGB1_0892</name>
</gene>
<feature type="chain" id="PRO_1000080973" description="Nucleoside diphosphate kinase">
    <location>
        <begin position="1"/>
        <end position="141"/>
    </location>
</feature>
<feature type="active site" description="Pros-phosphohistidine intermediate" evidence="1">
    <location>
        <position position="117"/>
    </location>
</feature>
<feature type="binding site" evidence="1">
    <location>
        <position position="11"/>
    </location>
    <ligand>
        <name>ATP</name>
        <dbReference type="ChEBI" id="CHEBI:30616"/>
    </ligand>
</feature>
<feature type="binding site" evidence="1">
    <location>
        <position position="59"/>
    </location>
    <ligand>
        <name>ATP</name>
        <dbReference type="ChEBI" id="CHEBI:30616"/>
    </ligand>
</feature>
<feature type="binding site" evidence="1">
    <location>
        <position position="87"/>
    </location>
    <ligand>
        <name>ATP</name>
        <dbReference type="ChEBI" id="CHEBI:30616"/>
    </ligand>
</feature>
<feature type="binding site" evidence="1">
    <location>
        <position position="93"/>
    </location>
    <ligand>
        <name>ATP</name>
        <dbReference type="ChEBI" id="CHEBI:30616"/>
    </ligand>
</feature>
<feature type="binding site" evidence="1">
    <location>
        <position position="104"/>
    </location>
    <ligand>
        <name>ATP</name>
        <dbReference type="ChEBI" id="CHEBI:30616"/>
    </ligand>
</feature>
<feature type="binding site" evidence="1">
    <location>
        <position position="114"/>
    </location>
    <ligand>
        <name>ATP</name>
        <dbReference type="ChEBI" id="CHEBI:30616"/>
    </ligand>
</feature>
<name>NDK_PSEPG</name>
<comment type="function">
    <text evidence="1">Major role in the synthesis of nucleoside triphosphates other than ATP. The ATP gamma phosphate is transferred to the NDP beta phosphate via a ping-pong mechanism, using a phosphorylated active-site intermediate.</text>
</comment>
<comment type="catalytic activity">
    <reaction evidence="1">
        <text>a 2'-deoxyribonucleoside 5'-diphosphate + ATP = a 2'-deoxyribonucleoside 5'-triphosphate + ADP</text>
        <dbReference type="Rhea" id="RHEA:44640"/>
        <dbReference type="ChEBI" id="CHEBI:30616"/>
        <dbReference type="ChEBI" id="CHEBI:61560"/>
        <dbReference type="ChEBI" id="CHEBI:73316"/>
        <dbReference type="ChEBI" id="CHEBI:456216"/>
        <dbReference type="EC" id="2.7.4.6"/>
    </reaction>
</comment>
<comment type="catalytic activity">
    <reaction evidence="1">
        <text>a ribonucleoside 5'-diphosphate + ATP = a ribonucleoside 5'-triphosphate + ADP</text>
        <dbReference type="Rhea" id="RHEA:18113"/>
        <dbReference type="ChEBI" id="CHEBI:30616"/>
        <dbReference type="ChEBI" id="CHEBI:57930"/>
        <dbReference type="ChEBI" id="CHEBI:61557"/>
        <dbReference type="ChEBI" id="CHEBI:456216"/>
        <dbReference type="EC" id="2.7.4.6"/>
    </reaction>
</comment>
<comment type="cofactor">
    <cofactor evidence="1">
        <name>Mg(2+)</name>
        <dbReference type="ChEBI" id="CHEBI:18420"/>
    </cofactor>
</comment>
<comment type="subunit">
    <text evidence="1">Homotetramer.</text>
</comment>
<comment type="subcellular location">
    <subcellularLocation>
        <location evidence="1">Cytoplasm</location>
    </subcellularLocation>
</comment>
<comment type="similarity">
    <text evidence="1">Belongs to the NDK family.</text>
</comment>
<protein>
    <recommendedName>
        <fullName evidence="1">Nucleoside diphosphate kinase</fullName>
        <shortName evidence="1">NDK</shortName>
        <shortName evidence="1">NDP kinase</shortName>
        <ecNumber evidence="1">2.7.4.6</ecNumber>
    </recommendedName>
    <alternativeName>
        <fullName evidence="1">Nucleoside-2-P kinase</fullName>
    </alternativeName>
</protein>